<protein>
    <recommendedName>
        <fullName evidence="1">Glutamine--tRNA ligase</fullName>
        <ecNumber evidence="1">6.1.1.18</ecNumber>
    </recommendedName>
    <alternativeName>
        <fullName evidence="1">Glutaminyl-tRNA synthetase</fullName>
        <shortName evidence="1">GlnRS</shortName>
    </alternativeName>
</protein>
<proteinExistence type="inferred from homology"/>
<name>SYQ_SALCH</name>
<reference key="1">
    <citation type="journal article" date="2005" name="Nucleic Acids Res.">
        <title>The genome sequence of Salmonella enterica serovar Choleraesuis, a highly invasive and resistant zoonotic pathogen.</title>
        <authorList>
            <person name="Chiu C.-H."/>
            <person name="Tang P."/>
            <person name="Chu C."/>
            <person name="Hu S."/>
            <person name="Bao Q."/>
            <person name="Yu J."/>
            <person name="Chou Y.-Y."/>
            <person name="Wang H.-S."/>
            <person name="Lee Y.-S."/>
        </authorList>
    </citation>
    <scope>NUCLEOTIDE SEQUENCE [LARGE SCALE GENOMIC DNA]</scope>
    <source>
        <strain>SC-B67</strain>
    </source>
</reference>
<accession>Q57RP8</accession>
<dbReference type="EC" id="6.1.1.18" evidence="1"/>
<dbReference type="EMBL" id="AE017220">
    <property type="protein sequence ID" value="AAX64613.1"/>
    <property type="molecule type" value="Genomic_DNA"/>
</dbReference>
<dbReference type="RefSeq" id="WP_001539468.1">
    <property type="nucleotide sequence ID" value="NC_006905.1"/>
</dbReference>
<dbReference type="SMR" id="Q57RP8"/>
<dbReference type="KEGG" id="sec:SCH_0707"/>
<dbReference type="HOGENOM" id="CLU_001882_2_3_6"/>
<dbReference type="Proteomes" id="UP000000538">
    <property type="component" value="Chromosome"/>
</dbReference>
<dbReference type="GO" id="GO:0005829">
    <property type="term" value="C:cytosol"/>
    <property type="evidence" value="ECO:0007669"/>
    <property type="project" value="TreeGrafter"/>
</dbReference>
<dbReference type="GO" id="GO:0005524">
    <property type="term" value="F:ATP binding"/>
    <property type="evidence" value="ECO:0007669"/>
    <property type="project" value="UniProtKB-UniRule"/>
</dbReference>
<dbReference type="GO" id="GO:0004819">
    <property type="term" value="F:glutamine-tRNA ligase activity"/>
    <property type="evidence" value="ECO:0007669"/>
    <property type="project" value="UniProtKB-UniRule"/>
</dbReference>
<dbReference type="GO" id="GO:0006425">
    <property type="term" value="P:glutaminyl-tRNA aminoacylation"/>
    <property type="evidence" value="ECO:0007669"/>
    <property type="project" value="InterPro"/>
</dbReference>
<dbReference type="GO" id="GO:0006424">
    <property type="term" value="P:glutamyl-tRNA aminoacylation"/>
    <property type="evidence" value="ECO:0007669"/>
    <property type="project" value="UniProtKB-UniRule"/>
</dbReference>
<dbReference type="CDD" id="cd00807">
    <property type="entry name" value="GlnRS_core"/>
    <property type="match status" value="1"/>
</dbReference>
<dbReference type="FunFam" id="1.10.1160.10:FF:000001">
    <property type="entry name" value="Glutamine--tRNA ligase"/>
    <property type="match status" value="1"/>
</dbReference>
<dbReference type="FunFam" id="2.40.240.10:FF:000001">
    <property type="entry name" value="Glutamine--tRNA ligase"/>
    <property type="match status" value="1"/>
</dbReference>
<dbReference type="FunFam" id="2.40.240.10:FF:000003">
    <property type="entry name" value="Glutamine--tRNA ligase"/>
    <property type="match status" value="1"/>
</dbReference>
<dbReference type="FunFam" id="3.90.800.10:FF:000001">
    <property type="entry name" value="Glutamine--tRNA ligase"/>
    <property type="match status" value="1"/>
</dbReference>
<dbReference type="FunFam" id="3.40.50.620:FF:000037">
    <property type="entry name" value="Glutamine--tRNA ligase cytoplasmic"/>
    <property type="match status" value="1"/>
</dbReference>
<dbReference type="Gene3D" id="1.10.1160.10">
    <property type="entry name" value="Glutamyl-trna Synthetase, Domain 2"/>
    <property type="match status" value="1"/>
</dbReference>
<dbReference type="Gene3D" id="3.90.800.10">
    <property type="entry name" value="Glutamyl-tRNA Synthetase, Domain 3"/>
    <property type="match status" value="1"/>
</dbReference>
<dbReference type="Gene3D" id="3.40.50.620">
    <property type="entry name" value="HUPs"/>
    <property type="match status" value="1"/>
</dbReference>
<dbReference type="Gene3D" id="2.40.240.10">
    <property type="entry name" value="Ribosomal Protein L25, Chain P"/>
    <property type="match status" value="2"/>
</dbReference>
<dbReference type="HAMAP" id="MF_00126">
    <property type="entry name" value="Gln_tRNA_synth"/>
    <property type="match status" value="1"/>
</dbReference>
<dbReference type="InterPro" id="IPR001412">
    <property type="entry name" value="aa-tRNA-synth_I_CS"/>
</dbReference>
<dbReference type="InterPro" id="IPR004514">
    <property type="entry name" value="Gln-tRNA-synth"/>
</dbReference>
<dbReference type="InterPro" id="IPR050132">
    <property type="entry name" value="Gln/Glu-tRNA_Ligase"/>
</dbReference>
<dbReference type="InterPro" id="IPR022861">
    <property type="entry name" value="Gln_tRNA_ligase_bac"/>
</dbReference>
<dbReference type="InterPro" id="IPR000924">
    <property type="entry name" value="Glu/Gln-tRNA-synth"/>
</dbReference>
<dbReference type="InterPro" id="IPR020058">
    <property type="entry name" value="Glu/Gln-tRNA-synth_Ib_cat-dom"/>
</dbReference>
<dbReference type="InterPro" id="IPR020059">
    <property type="entry name" value="Glu/Gln-tRNA-synth_Ib_codon-bd"/>
</dbReference>
<dbReference type="InterPro" id="IPR020061">
    <property type="entry name" value="Glu_tRNA_lig_a-bdl"/>
</dbReference>
<dbReference type="InterPro" id="IPR020056">
    <property type="entry name" value="Rbsml_bL25/Gln-tRNA_synth_N"/>
</dbReference>
<dbReference type="InterPro" id="IPR011035">
    <property type="entry name" value="Ribosomal_bL25/Gln-tRNA_synth"/>
</dbReference>
<dbReference type="InterPro" id="IPR014729">
    <property type="entry name" value="Rossmann-like_a/b/a_fold"/>
</dbReference>
<dbReference type="InterPro" id="IPR049437">
    <property type="entry name" value="tRNA-synt_1c_C2"/>
</dbReference>
<dbReference type="NCBIfam" id="TIGR00440">
    <property type="entry name" value="glnS"/>
    <property type="match status" value="1"/>
</dbReference>
<dbReference type="NCBIfam" id="NF011291">
    <property type="entry name" value="PRK14703.1"/>
    <property type="match status" value="1"/>
</dbReference>
<dbReference type="PANTHER" id="PTHR43097:SF5">
    <property type="entry name" value="GLUTAMATE--TRNA LIGASE"/>
    <property type="match status" value="1"/>
</dbReference>
<dbReference type="PANTHER" id="PTHR43097">
    <property type="entry name" value="GLUTAMINE-TRNA LIGASE"/>
    <property type="match status" value="1"/>
</dbReference>
<dbReference type="Pfam" id="PF00749">
    <property type="entry name" value="tRNA-synt_1c"/>
    <property type="match status" value="1"/>
</dbReference>
<dbReference type="Pfam" id="PF03950">
    <property type="entry name" value="tRNA-synt_1c_C"/>
    <property type="match status" value="1"/>
</dbReference>
<dbReference type="Pfam" id="PF20974">
    <property type="entry name" value="tRNA-synt_1c_C2"/>
    <property type="match status" value="1"/>
</dbReference>
<dbReference type="PRINTS" id="PR00987">
    <property type="entry name" value="TRNASYNTHGLU"/>
</dbReference>
<dbReference type="SUPFAM" id="SSF52374">
    <property type="entry name" value="Nucleotidylyl transferase"/>
    <property type="match status" value="1"/>
</dbReference>
<dbReference type="SUPFAM" id="SSF50715">
    <property type="entry name" value="Ribosomal protein L25-like"/>
    <property type="match status" value="1"/>
</dbReference>
<dbReference type="PROSITE" id="PS00178">
    <property type="entry name" value="AA_TRNA_LIGASE_I"/>
    <property type="match status" value="1"/>
</dbReference>
<sequence>MSEAEARPTNFIRQIIDEDLASGKHTTVHTRFPPEPNGYLHIGHAKSICLNFGIAQDYQGQCNLRFDDTNPVKEDIEYVDSIKNDVEWLGFHWSGDIRYSSDYFDQLHAYAVELINKGLAYVDELTPEQIREYRGTLTAPGKNSPFRDRSVEENLALFEKMRTGGFEEGKACLRAKIDMASPFIVMRDPVLYRIKFAEHHQTGNKWCIYPMYDFTHCISDALEGITHSLCTLEFQDNRRLYDWVLDNITIPVHPRQYEFSRLNLEYTVMSKRKLNLLVTDKHVEGWDDPRMPTISGLRRRGYTAASIREFCKRIGVTKQDNTIEMASLESCIREDLNENAPRAMAVIDPVKLVIENYPQGESEMVTMPNHPNKPEMGSREVPFSGEIWIDRADFREEANKQYKRLVMGKEVRLRNAYVIKAERVEKDAEGNITTIFCTYDADTLSKDPADGRKVKGVIHWVSAAHALPIEIRLYDRLFSVPNPGTAEDFLSVINPESLVIKQGYGEPSLKAAVAGKAFQFEREGYFCLDSCYATADKLVFNRTVGLRDTWAKAGE</sequence>
<comment type="catalytic activity">
    <reaction evidence="1">
        <text>tRNA(Gln) + L-glutamine + ATP = L-glutaminyl-tRNA(Gln) + AMP + diphosphate</text>
        <dbReference type="Rhea" id="RHEA:20121"/>
        <dbReference type="Rhea" id="RHEA-COMP:9662"/>
        <dbReference type="Rhea" id="RHEA-COMP:9681"/>
        <dbReference type="ChEBI" id="CHEBI:30616"/>
        <dbReference type="ChEBI" id="CHEBI:33019"/>
        <dbReference type="ChEBI" id="CHEBI:58359"/>
        <dbReference type="ChEBI" id="CHEBI:78442"/>
        <dbReference type="ChEBI" id="CHEBI:78521"/>
        <dbReference type="ChEBI" id="CHEBI:456215"/>
        <dbReference type="EC" id="6.1.1.18"/>
    </reaction>
</comment>
<comment type="subunit">
    <text evidence="1">Monomer.</text>
</comment>
<comment type="subcellular location">
    <subcellularLocation>
        <location evidence="1">Cytoplasm</location>
    </subcellularLocation>
</comment>
<comment type="similarity">
    <text evidence="1">Belongs to the class-I aminoacyl-tRNA synthetase family.</text>
</comment>
<keyword id="KW-0030">Aminoacyl-tRNA synthetase</keyword>
<keyword id="KW-0067">ATP-binding</keyword>
<keyword id="KW-0963">Cytoplasm</keyword>
<keyword id="KW-0436">Ligase</keyword>
<keyword id="KW-0547">Nucleotide-binding</keyword>
<keyword id="KW-0648">Protein biosynthesis</keyword>
<organism>
    <name type="scientific">Salmonella choleraesuis (strain SC-B67)</name>
    <dbReference type="NCBI Taxonomy" id="321314"/>
    <lineage>
        <taxon>Bacteria</taxon>
        <taxon>Pseudomonadati</taxon>
        <taxon>Pseudomonadota</taxon>
        <taxon>Gammaproteobacteria</taxon>
        <taxon>Enterobacterales</taxon>
        <taxon>Enterobacteriaceae</taxon>
        <taxon>Salmonella</taxon>
    </lineage>
</organism>
<feature type="chain" id="PRO_0000242873" description="Glutamine--tRNA ligase">
    <location>
        <begin position="1"/>
        <end position="555"/>
    </location>
</feature>
<feature type="region of interest" description="Interaction with tRNA" evidence="1">
    <location>
        <begin position="317"/>
        <end position="324"/>
    </location>
</feature>
<feature type="short sequence motif" description="'HIGH' region" evidence="1">
    <location>
        <begin position="34"/>
        <end position="44"/>
    </location>
</feature>
<feature type="short sequence motif" description="'KMSKS' region" evidence="1">
    <location>
        <begin position="268"/>
        <end position="272"/>
    </location>
</feature>
<feature type="binding site" evidence="1">
    <location>
        <begin position="35"/>
        <end position="37"/>
    </location>
    <ligand>
        <name>ATP</name>
        <dbReference type="ChEBI" id="CHEBI:30616"/>
    </ligand>
</feature>
<feature type="binding site" evidence="1">
    <location>
        <begin position="41"/>
        <end position="47"/>
    </location>
    <ligand>
        <name>ATP</name>
        <dbReference type="ChEBI" id="CHEBI:30616"/>
    </ligand>
</feature>
<feature type="binding site" evidence="1">
    <location>
        <position position="67"/>
    </location>
    <ligand>
        <name>L-glutamine</name>
        <dbReference type="ChEBI" id="CHEBI:58359"/>
    </ligand>
</feature>
<feature type="binding site" evidence="1">
    <location>
        <position position="212"/>
    </location>
    <ligand>
        <name>L-glutamine</name>
        <dbReference type="ChEBI" id="CHEBI:58359"/>
    </ligand>
</feature>
<feature type="binding site" evidence="1">
    <location>
        <position position="231"/>
    </location>
    <ligand>
        <name>ATP</name>
        <dbReference type="ChEBI" id="CHEBI:30616"/>
    </ligand>
</feature>
<feature type="binding site" evidence="1">
    <location>
        <begin position="261"/>
        <end position="262"/>
    </location>
    <ligand>
        <name>ATP</name>
        <dbReference type="ChEBI" id="CHEBI:30616"/>
    </ligand>
</feature>
<feature type="binding site" evidence="1">
    <location>
        <begin position="269"/>
        <end position="271"/>
    </location>
    <ligand>
        <name>ATP</name>
        <dbReference type="ChEBI" id="CHEBI:30616"/>
    </ligand>
</feature>
<evidence type="ECO:0000255" key="1">
    <source>
        <dbReference type="HAMAP-Rule" id="MF_00126"/>
    </source>
</evidence>
<gene>
    <name evidence="1" type="primary">glnS</name>
    <name type="ordered locus">SCH_0707</name>
</gene>